<gene>
    <name evidence="1" type="primary">ureG</name>
    <name type="ordered locus">DR_A0312</name>
</gene>
<keyword id="KW-0143">Chaperone</keyword>
<keyword id="KW-0963">Cytoplasm</keyword>
<keyword id="KW-0342">GTP-binding</keyword>
<keyword id="KW-0996">Nickel insertion</keyword>
<keyword id="KW-0547">Nucleotide-binding</keyword>
<keyword id="KW-1185">Reference proteome</keyword>
<accession>Q9RYK0</accession>
<protein>
    <recommendedName>
        <fullName evidence="1">Urease accessory protein UreG</fullName>
    </recommendedName>
</protein>
<feature type="chain" id="PRO_0000347386" description="Urease accessory protein UreG">
    <location>
        <begin position="1"/>
        <end position="213"/>
    </location>
</feature>
<feature type="binding site" evidence="1">
    <location>
        <begin position="10"/>
        <end position="17"/>
    </location>
    <ligand>
        <name>GTP</name>
        <dbReference type="ChEBI" id="CHEBI:37565"/>
    </ligand>
</feature>
<organism>
    <name type="scientific">Deinococcus radiodurans (strain ATCC 13939 / DSM 20539 / JCM 16871 / CCUG 27074 / LMG 4051 / NBRC 15346 / NCIMB 9279 / VKM B-1422 / R1)</name>
    <dbReference type="NCBI Taxonomy" id="243230"/>
    <lineage>
        <taxon>Bacteria</taxon>
        <taxon>Thermotogati</taxon>
        <taxon>Deinococcota</taxon>
        <taxon>Deinococci</taxon>
        <taxon>Deinococcales</taxon>
        <taxon>Deinococcaceae</taxon>
        <taxon>Deinococcus</taxon>
    </lineage>
</organism>
<sequence>MTPLKIGVGGPVGSGKTALLEVLCRELRDRYDLAVITNDIYTFEDQRILTRAAALAPERIRGVQTGGCPHTAIREDSSLNQETVEALQGEFPGLELLFIESGGDNLASSFSPELVDAWLFVLDVAGGEKVPRKGGPGIRHSDLLVINKTDLAPLVGADLRVMDADARAQRRAGDEVRPYVFTNLKSGAGVDEIIAWIEHDLLFRDVTPPRVGL</sequence>
<name>UREG_DEIRA</name>
<dbReference type="EMBL" id="AE001825">
    <property type="protein sequence ID" value="AAF12466.1"/>
    <property type="molecule type" value="Genomic_DNA"/>
</dbReference>
<dbReference type="PIR" id="E75585">
    <property type="entry name" value="E75585"/>
</dbReference>
<dbReference type="RefSeq" id="NP_285635.1">
    <property type="nucleotide sequence ID" value="NC_001264.1"/>
</dbReference>
<dbReference type="RefSeq" id="WP_010889571.1">
    <property type="nucleotide sequence ID" value="NC_001264.1"/>
</dbReference>
<dbReference type="SMR" id="Q9RYK0"/>
<dbReference type="STRING" id="243230.DR_A0312"/>
<dbReference type="PaxDb" id="243230-DR_A0312"/>
<dbReference type="EnsemblBacteria" id="AAF12466">
    <property type="protein sequence ID" value="AAF12466"/>
    <property type="gene ID" value="DR_A0312"/>
</dbReference>
<dbReference type="GeneID" id="69519196"/>
<dbReference type="KEGG" id="dra:DR_A0312"/>
<dbReference type="PATRIC" id="fig|243230.17.peg.3202"/>
<dbReference type="eggNOG" id="COG0378">
    <property type="taxonomic scope" value="Bacteria"/>
</dbReference>
<dbReference type="HOGENOM" id="CLU_072144_1_0_0"/>
<dbReference type="InParanoid" id="Q9RYK0"/>
<dbReference type="OrthoDB" id="9802035at2"/>
<dbReference type="Proteomes" id="UP000002524">
    <property type="component" value="Chromosome 2"/>
</dbReference>
<dbReference type="GO" id="GO:0005737">
    <property type="term" value="C:cytoplasm"/>
    <property type="evidence" value="ECO:0007669"/>
    <property type="project" value="UniProtKB-SubCell"/>
</dbReference>
<dbReference type="GO" id="GO:0005525">
    <property type="term" value="F:GTP binding"/>
    <property type="evidence" value="ECO:0007669"/>
    <property type="project" value="UniProtKB-KW"/>
</dbReference>
<dbReference type="GO" id="GO:0003924">
    <property type="term" value="F:GTPase activity"/>
    <property type="evidence" value="ECO:0007669"/>
    <property type="project" value="InterPro"/>
</dbReference>
<dbReference type="GO" id="GO:0016151">
    <property type="term" value="F:nickel cation binding"/>
    <property type="evidence" value="ECO:0007669"/>
    <property type="project" value="UniProtKB-UniRule"/>
</dbReference>
<dbReference type="GO" id="GO:0043419">
    <property type="term" value="P:urea catabolic process"/>
    <property type="evidence" value="ECO:0007669"/>
    <property type="project" value="InterPro"/>
</dbReference>
<dbReference type="CDD" id="cd05540">
    <property type="entry name" value="UreG"/>
    <property type="match status" value="1"/>
</dbReference>
<dbReference type="Gene3D" id="3.40.50.300">
    <property type="entry name" value="P-loop containing nucleotide triphosphate hydrolases"/>
    <property type="match status" value="1"/>
</dbReference>
<dbReference type="HAMAP" id="MF_01389">
    <property type="entry name" value="UreG"/>
    <property type="match status" value="1"/>
</dbReference>
<dbReference type="InterPro" id="IPR003495">
    <property type="entry name" value="CobW/HypB/UreG_nucleotide-bd"/>
</dbReference>
<dbReference type="InterPro" id="IPR027417">
    <property type="entry name" value="P-loop_NTPase"/>
</dbReference>
<dbReference type="InterPro" id="IPR004400">
    <property type="entry name" value="UreG"/>
</dbReference>
<dbReference type="NCBIfam" id="TIGR00101">
    <property type="entry name" value="ureG"/>
    <property type="match status" value="1"/>
</dbReference>
<dbReference type="PANTHER" id="PTHR31715">
    <property type="entry name" value="UREASE ACCESSORY PROTEIN G"/>
    <property type="match status" value="1"/>
</dbReference>
<dbReference type="PANTHER" id="PTHR31715:SF0">
    <property type="entry name" value="UREASE ACCESSORY PROTEIN G"/>
    <property type="match status" value="1"/>
</dbReference>
<dbReference type="Pfam" id="PF02492">
    <property type="entry name" value="cobW"/>
    <property type="match status" value="1"/>
</dbReference>
<dbReference type="PIRSF" id="PIRSF005624">
    <property type="entry name" value="Ni-bind_GTPase"/>
    <property type="match status" value="1"/>
</dbReference>
<dbReference type="SUPFAM" id="SSF52540">
    <property type="entry name" value="P-loop containing nucleoside triphosphate hydrolases"/>
    <property type="match status" value="1"/>
</dbReference>
<evidence type="ECO:0000255" key="1">
    <source>
        <dbReference type="HAMAP-Rule" id="MF_01389"/>
    </source>
</evidence>
<comment type="function">
    <text evidence="1">Facilitates the functional incorporation of the urease nickel metallocenter. This process requires GTP hydrolysis, probably effectuated by UreG.</text>
</comment>
<comment type="subunit">
    <text evidence="1">Homodimer. UreD, UreF and UreG form a complex that acts as a GTP-hydrolysis-dependent molecular chaperone, activating the urease apoprotein by helping to assemble the nickel containing metallocenter of UreC. The UreE protein probably delivers the nickel.</text>
</comment>
<comment type="subcellular location">
    <subcellularLocation>
        <location evidence="1">Cytoplasm</location>
    </subcellularLocation>
</comment>
<comment type="similarity">
    <text evidence="1">Belongs to the SIMIBI class G3E GTPase family. UreG subfamily.</text>
</comment>
<proteinExistence type="inferred from homology"/>
<reference key="1">
    <citation type="journal article" date="1999" name="Science">
        <title>Genome sequence of the radioresistant bacterium Deinococcus radiodurans R1.</title>
        <authorList>
            <person name="White O."/>
            <person name="Eisen J.A."/>
            <person name="Heidelberg J.F."/>
            <person name="Hickey E.K."/>
            <person name="Peterson J.D."/>
            <person name="Dodson R.J."/>
            <person name="Haft D.H."/>
            <person name="Gwinn M.L."/>
            <person name="Nelson W.C."/>
            <person name="Richardson D.L."/>
            <person name="Moffat K.S."/>
            <person name="Qin H."/>
            <person name="Jiang L."/>
            <person name="Pamphile W."/>
            <person name="Crosby M."/>
            <person name="Shen M."/>
            <person name="Vamathevan J.J."/>
            <person name="Lam P."/>
            <person name="McDonald L.A."/>
            <person name="Utterback T.R."/>
            <person name="Zalewski C."/>
            <person name="Makarova K.S."/>
            <person name="Aravind L."/>
            <person name="Daly M.J."/>
            <person name="Minton K.W."/>
            <person name="Fleischmann R.D."/>
            <person name="Ketchum K.A."/>
            <person name="Nelson K.E."/>
            <person name="Salzberg S.L."/>
            <person name="Smith H.O."/>
            <person name="Venter J.C."/>
            <person name="Fraser C.M."/>
        </authorList>
    </citation>
    <scope>NUCLEOTIDE SEQUENCE [LARGE SCALE GENOMIC DNA]</scope>
    <source>
        <strain>ATCC 13939 / DSM 20539 / JCM 16871 / CCUG 27074 / LMG 4051 / NBRC 15346 / NCIMB 9279 / VKM B-1422 / R1</strain>
    </source>
</reference>